<sequence length="173" mass="18641">MAIVLGIDPGSRVTGYGVIRQQGRQLTYLGSGCIRTVVDDMPTRLKLIYAGVTEIITQFQPDFFAIEQVFMAKNPDSALKLGQARGAAIVAAVNLNLPVSEYAARQVKQTVVGTGAAEKSQVQHMVRSLLKLPANPQADAADALAIAITHCHLSQNTLRLGNDQMTLSRGRIR</sequence>
<keyword id="KW-0963">Cytoplasm</keyword>
<keyword id="KW-0227">DNA damage</keyword>
<keyword id="KW-0233">DNA recombination</keyword>
<keyword id="KW-0234">DNA repair</keyword>
<keyword id="KW-0238">DNA-binding</keyword>
<keyword id="KW-0255">Endonuclease</keyword>
<keyword id="KW-0378">Hydrolase</keyword>
<keyword id="KW-0460">Magnesium</keyword>
<keyword id="KW-0479">Metal-binding</keyword>
<keyword id="KW-0540">Nuclease</keyword>
<feature type="chain" id="PRO_0000225191" description="Crossover junction endodeoxyribonuclease RuvC">
    <location>
        <begin position="1"/>
        <end position="173"/>
    </location>
</feature>
<feature type="active site" evidence="1">
    <location>
        <position position="8"/>
    </location>
</feature>
<feature type="active site" evidence="1">
    <location>
        <position position="67"/>
    </location>
</feature>
<feature type="active site" evidence="1">
    <location>
        <position position="139"/>
    </location>
</feature>
<feature type="binding site" evidence="1">
    <location>
        <position position="8"/>
    </location>
    <ligand>
        <name>Mg(2+)</name>
        <dbReference type="ChEBI" id="CHEBI:18420"/>
        <label>1</label>
    </ligand>
</feature>
<feature type="binding site" evidence="1">
    <location>
        <position position="67"/>
    </location>
    <ligand>
        <name>Mg(2+)</name>
        <dbReference type="ChEBI" id="CHEBI:18420"/>
        <label>2</label>
    </ligand>
</feature>
<feature type="binding site" evidence="1">
    <location>
        <position position="139"/>
    </location>
    <ligand>
        <name>Mg(2+)</name>
        <dbReference type="ChEBI" id="CHEBI:18420"/>
        <label>1</label>
    </ligand>
</feature>
<comment type="function">
    <text evidence="1">The RuvA-RuvB-RuvC complex processes Holliday junction (HJ) DNA during genetic recombination and DNA repair. Endonuclease that resolves HJ intermediates. Cleaves cruciform DNA by making single-stranded nicks across the HJ at symmetrical positions within the homologous arms, yielding a 5'-phosphate and a 3'-hydroxyl group; requires a central core of homology in the junction. The consensus cleavage sequence is 5'-(A/T)TT(C/G)-3'. Cleavage occurs on the 3'-side of the TT dinucleotide at the point of strand exchange. HJ branch migration catalyzed by RuvA-RuvB allows RuvC to scan DNA until it finds its consensus sequence, where it cleaves and resolves the cruciform DNA.</text>
</comment>
<comment type="catalytic activity">
    <reaction evidence="1">
        <text>Endonucleolytic cleavage at a junction such as a reciprocal single-stranded crossover between two homologous DNA duplexes (Holliday junction).</text>
        <dbReference type="EC" id="3.1.21.10"/>
    </reaction>
</comment>
<comment type="cofactor">
    <cofactor evidence="1">
        <name>Mg(2+)</name>
        <dbReference type="ChEBI" id="CHEBI:18420"/>
    </cofactor>
    <text evidence="1">Binds 2 Mg(2+) ion per subunit.</text>
</comment>
<comment type="subunit">
    <text evidence="1">Homodimer which binds Holliday junction (HJ) DNA. The HJ becomes 2-fold symmetrical on binding to RuvC with unstacked arms; it has a different conformation from HJ DNA in complex with RuvA. In the full resolvosome a probable DNA-RuvA(4)-RuvB(12)-RuvC(2) complex forms which resolves the HJ.</text>
</comment>
<comment type="subcellular location">
    <subcellularLocation>
        <location evidence="1">Cytoplasm</location>
    </subcellularLocation>
</comment>
<comment type="similarity">
    <text evidence="1">Belongs to the RuvC family.</text>
</comment>
<proteinExistence type="inferred from homology"/>
<accession>Q66AU1</accession>
<protein>
    <recommendedName>
        <fullName evidence="1">Crossover junction endodeoxyribonuclease RuvC</fullName>
        <ecNumber evidence="1">3.1.21.10</ecNumber>
    </recommendedName>
    <alternativeName>
        <fullName evidence="1">Holliday junction nuclease RuvC</fullName>
    </alternativeName>
    <alternativeName>
        <fullName evidence="1">Holliday junction resolvase RuvC</fullName>
    </alternativeName>
</protein>
<gene>
    <name evidence="1" type="primary">ruvC</name>
    <name type="ordered locus">YPTB2039</name>
</gene>
<reference key="1">
    <citation type="journal article" date="2004" name="Proc. Natl. Acad. Sci. U.S.A.">
        <title>Insights into the evolution of Yersinia pestis through whole-genome comparison with Yersinia pseudotuberculosis.</title>
        <authorList>
            <person name="Chain P.S.G."/>
            <person name="Carniel E."/>
            <person name="Larimer F.W."/>
            <person name="Lamerdin J."/>
            <person name="Stoutland P.O."/>
            <person name="Regala W.M."/>
            <person name="Georgescu A.M."/>
            <person name="Vergez L.M."/>
            <person name="Land M.L."/>
            <person name="Motin V.L."/>
            <person name="Brubaker R.R."/>
            <person name="Fowler J."/>
            <person name="Hinnebusch J."/>
            <person name="Marceau M."/>
            <person name="Medigue C."/>
            <person name="Simonet M."/>
            <person name="Chenal-Francisque V."/>
            <person name="Souza B."/>
            <person name="Dacheux D."/>
            <person name="Elliott J.M."/>
            <person name="Derbise A."/>
            <person name="Hauser L.J."/>
            <person name="Garcia E."/>
        </authorList>
    </citation>
    <scope>NUCLEOTIDE SEQUENCE [LARGE SCALE GENOMIC DNA]</scope>
    <source>
        <strain>IP32953</strain>
    </source>
</reference>
<evidence type="ECO:0000255" key="1">
    <source>
        <dbReference type="HAMAP-Rule" id="MF_00034"/>
    </source>
</evidence>
<name>RUVC_YERPS</name>
<dbReference type="EC" id="3.1.21.10" evidence="1"/>
<dbReference type="EMBL" id="BX936398">
    <property type="protein sequence ID" value="CAH21277.1"/>
    <property type="molecule type" value="Genomic_DNA"/>
</dbReference>
<dbReference type="RefSeq" id="WP_002211201.1">
    <property type="nucleotide sequence ID" value="NZ_CP009712.1"/>
</dbReference>
<dbReference type="SMR" id="Q66AU1"/>
<dbReference type="GeneID" id="57976605"/>
<dbReference type="KEGG" id="ypo:BZ17_426"/>
<dbReference type="KEGG" id="yps:YPTB2039"/>
<dbReference type="PATRIC" id="fig|273123.14.peg.455"/>
<dbReference type="Proteomes" id="UP000001011">
    <property type="component" value="Chromosome"/>
</dbReference>
<dbReference type="GO" id="GO:0005737">
    <property type="term" value="C:cytoplasm"/>
    <property type="evidence" value="ECO:0007669"/>
    <property type="project" value="UniProtKB-SubCell"/>
</dbReference>
<dbReference type="GO" id="GO:0048476">
    <property type="term" value="C:Holliday junction resolvase complex"/>
    <property type="evidence" value="ECO:0007669"/>
    <property type="project" value="UniProtKB-UniRule"/>
</dbReference>
<dbReference type="GO" id="GO:0008821">
    <property type="term" value="F:crossover junction DNA endonuclease activity"/>
    <property type="evidence" value="ECO:0007669"/>
    <property type="project" value="UniProtKB-UniRule"/>
</dbReference>
<dbReference type="GO" id="GO:0003677">
    <property type="term" value="F:DNA binding"/>
    <property type="evidence" value="ECO:0007669"/>
    <property type="project" value="UniProtKB-KW"/>
</dbReference>
<dbReference type="GO" id="GO:0000287">
    <property type="term" value="F:magnesium ion binding"/>
    <property type="evidence" value="ECO:0007669"/>
    <property type="project" value="UniProtKB-UniRule"/>
</dbReference>
<dbReference type="GO" id="GO:0006310">
    <property type="term" value="P:DNA recombination"/>
    <property type="evidence" value="ECO:0007669"/>
    <property type="project" value="UniProtKB-UniRule"/>
</dbReference>
<dbReference type="GO" id="GO:0006281">
    <property type="term" value="P:DNA repair"/>
    <property type="evidence" value="ECO:0007669"/>
    <property type="project" value="UniProtKB-UniRule"/>
</dbReference>
<dbReference type="CDD" id="cd16962">
    <property type="entry name" value="RuvC"/>
    <property type="match status" value="1"/>
</dbReference>
<dbReference type="FunFam" id="3.30.420.10:FF:000002">
    <property type="entry name" value="Crossover junction endodeoxyribonuclease RuvC"/>
    <property type="match status" value="1"/>
</dbReference>
<dbReference type="Gene3D" id="3.30.420.10">
    <property type="entry name" value="Ribonuclease H-like superfamily/Ribonuclease H"/>
    <property type="match status" value="1"/>
</dbReference>
<dbReference type="HAMAP" id="MF_00034">
    <property type="entry name" value="RuvC"/>
    <property type="match status" value="1"/>
</dbReference>
<dbReference type="InterPro" id="IPR012337">
    <property type="entry name" value="RNaseH-like_sf"/>
</dbReference>
<dbReference type="InterPro" id="IPR036397">
    <property type="entry name" value="RNaseH_sf"/>
</dbReference>
<dbReference type="InterPro" id="IPR020563">
    <property type="entry name" value="X-over_junc_endoDNase_Mg_BS"/>
</dbReference>
<dbReference type="InterPro" id="IPR002176">
    <property type="entry name" value="X-over_junc_endoDNase_RuvC"/>
</dbReference>
<dbReference type="NCBIfam" id="TIGR00228">
    <property type="entry name" value="ruvC"/>
    <property type="match status" value="1"/>
</dbReference>
<dbReference type="PANTHER" id="PTHR30194">
    <property type="entry name" value="CROSSOVER JUNCTION ENDODEOXYRIBONUCLEASE RUVC"/>
    <property type="match status" value="1"/>
</dbReference>
<dbReference type="PANTHER" id="PTHR30194:SF3">
    <property type="entry name" value="CROSSOVER JUNCTION ENDODEOXYRIBONUCLEASE RUVC"/>
    <property type="match status" value="1"/>
</dbReference>
<dbReference type="Pfam" id="PF02075">
    <property type="entry name" value="RuvC"/>
    <property type="match status" value="1"/>
</dbReference>
<dbReference type="PRINTS" id="PR00696">
    <property type="entry name" value="RSOLVASERUVC"/>
</dbReference>
<dbReference type="SUPFAM" id="SSF53098">
    <property type="entry name" value="Ribonuclease H-like"/>
    <property type="match status" value="1"/>
</dbReference>
<dbReference type="PROSITE" id="PS01321">
    <property type="entry name" value="RUVC"/>
    <property type="match status" value="1"/>
</dbReference>
<organism>
    <name type="scientific">Yersinia pseudotuberculosis serotype I (strain IP32953)</name>
    <dbReference type="NCBI Taxonomy" id="273123"/>
    <lineage>
        <taxon>Bacteria</taxon>
        <taxon>Pseudomonadati</taxon>
        <taxon>Pseudomonadota</taxon>
        <taxon>Gammaproteobacteria</taxon>
        <taxon>Enterobacterales</taxon>
        <taxon>Yersiniaceae</taxon>
        <taxon>Yersinia</taxon>
    </lineage>
</organism>